<evidence type="ECO:0000250" key="1"/>
<evidence type="ECO:0000250" key="2">
    <source>
        <dbReference type="UniProtKB" id="P23025"/>
    </source>
</evidence>
<evidence type="ECO:0000255" key="3"/>
<evidence type="ECO:0000256" key="4">
    <source>
        <dbReference type="SAM" id="MobiDB-lite"/>
    </source>
</evidence>
<evidence type="ECO:0000305" key="5"/>
<reference key="1">
    <citation type="journal article" date="1991" name="Biochem. Biophys. Res. Commun.">
        <title>Molecular cloning of human XPAC gene homologs from chicken, Xenopus laevis and Drosophila melanogaster.</title>
        <authorList>
            <person name="Shimamoto T."/>
            <person name="Kohno K."/>
            <person name="Tanaka K."/>
            <person name="Okada Y."/>
        </authorList>
    </citation>
    <scope>NUCLEOTIDE SEQUENCE [MRNA]</scope>
</reference>
<reference key="2">
    <citation type="journal article" date="1995" name="J. Biol. Chem.">
        <title>Expression and functional analyses of the Dxpa gene, the Drosophila homolog of the human excision repair gene XPA.</title>
        <authorList>
            <person name="Shimamoto T."/>
            <person name="Tanimura T."/>
            <person name="Yoneda Y."/>
            <person name="Kobayakawa Y."/>
            <person name="Sugasawa K."/>
            <person name="Hanaoka F."/>
            <person name="Oka M."/>
            <person name="Okada Y."/>
            <person name="Tanaka K."/>
            <person name="Kohno K."/>
        </authorList>
    </citation>
    <scope>NUCLEOTIDE SEQUENCE [GENOMIC DNA]</scope>
</reference>
<reference key="3">
    <citation type="journal article" date="2000" name="Science">
        <title>The genome sequence of Drosophila melanogaster.</title>
        <authorList>
            <person name="Adams M.D."/>
            <person name="Celniker S.E."/>
            <person name="Holt R.A."/>
            <person name="Evans C.A."/>
            <person name="Gocayne J.D."/>
            <person name="Amanatides P.G."/>
            <person name="Scherer S.E."/>
            <person name="Li P.W."/>
            <person name="Hoskins R.A."/>
            <person name="Galle R.F."/>
            <person name="George R.A."/>
            <person name="Lewis S.E."/>
            <person name="Richards S."/>
            <person name="Ashburner M."/>
            <person name="Henderson S.N."/>
            <person name="Sutton G.G."/>
            <person name="Wortman J.R."/>
            <person name="Yandell M.D."/>
            <person name="Zhang Q."/>
            <person name="Chen L.X."/>
            <person name="Brandon R.C."/>
            <person name="Rogers Y.-H.C."/>
            <person name="Blazej R.G."/>
            <person name="Champe M."/>
            <person name="Pfeiffer B.D."/>
            <person name="Wan K.H."/>
            <person name="Doyle C."/>
            <person name="Baxter E.G."/>
            <person name="Helt G."/>
            <person name="Nelson C.R."/>
            <person name="Miklos G.L.G."/>
            <person name="Abril J.F."/>
            <person name="Agbayani A."/>
            <person name="An H.-J."/>
            <person name="Andrews-Pfannkoch C."/>
            <person name="Baldwin D."/>
            <person name="Ballew R.M."/>
            <person name="Basu A."/>
            <person name="Baxendale J."/>
            <person name="Bayraktaroglu L."/>
            <person name="Beasley E.M."/>
            <person name="Beeson K.Y."/>
            <person name="Benos P.V."/>
            <person name="Berman B.P."/>
            <person name="Bhandari D."/>
            <person name="Bolshakov S."/>
            <person name="Borkova D."/>
            <person name="Botchan M.R."/>
            <person name="Bouck J."/>
            <person name="Brokstein P."/>
            <person name="Brottier P."/>
            <person name="Burtis K.C."/>
            <person name="Busam D.A."/>
            <person name="Butler H."/>
            <person name="Cadieu E."/>
            <person name="Center A."/>
            <person name="Chandra I."/>
            <person name="Cherry J.M."/>
            <person name="Cawley S."/>
            <person name="Dahlke C."/>
            <person name="Davenport L.B."/>
            <person name="Davies P."/>
            <person name="de Pablos B."/>
            <person name="Delcher A."/>
            <person name="Deng Z."/>
            <person name="Mays A.D."/>
            <person name="Dew I."/>
            <person name="Dietz S.M."/>
            <person name="Dodson K."/>
            <person name="Doup L.E."/>
            <person name="Downes M."/>
            <person name="Dugan-Rocha S."/>
            <person name="Dunkov B.C."/>
            <person name="Dunn P."/>
            <person name="Durbin K.J."/>
            <person name="Evangelista C.C."/>
            <person name="Ferraz C."/>
            <person name="Ferriera S."/>
            <person name="Fleischmann W."/>
            <person name="Fosler C."/>
            <person name="Gabrielian A.E."/>
            <person name="Garg N.S."/>
            <person name="Gelbart W.M."/>
            <person name="Glasser K."/>
            <person name="Glodek A."/>
            <person name="Gong F."/>
            <person name="Gorrell J.H."/>
            <person name="Gu Z."/>
            <person name="Guan P."/>
            <person name="Harris M."/>
            <person name="Harris N.L."/>
            <person name="Harvey D.A."/>
            <person name="Heiman T.J."/>
            <person name="Hernandez J.R."/>
            <person name="Houck J."/>
            <person name="Hostin D."/>
            <person name="Houston K.A."/>
            <person name="Howland T.J."/>
            <person name="Wei M.-H."/>
            <person name="Ibegwam C."/>
            <person name="Jalali M."/>
            <person name="Kalush F."/>
            <person name="Karpen G.H."/>
            <person name="Ke Z."/>
            <person name="Kennison J.A."/>
            <person name="Ketchum K.A."/>
            <person name="Kimmel B.E."/>
            <person name="Kodira C.D."/>
            <person name="Kraft C.L."/>
            <person name="Kravitz S."/>
            <person name="Kulp D."/>
            <person name="Lai Z."/>
            <person name="Lasko P."/>
            <person name="Lei Y."/>
            <person name="Levitsky A.A."/>
            <person name="Li J.H."/>
            <person name="Li Z."/>
            <person name="Liang Y."/>
            <person name="Lin X."/>
            <person name="Liu X."/>
            <person name="Mattei B."/>
            <person name="McIntosh T.C."/>
            <person name="McLeod M.P."/>
            <person name="McPherson D."/>
            <person name="Merkulov G."/>
            <person name="Milshina N.V."/>
            <person name="Mobarry C."/>
            <person name="Morris J."/>
            <person name="Moshrefi A."/>
            <person name="Mount S.M."/>
            <person name="Moy M."/>
            <person name="Murphy B."/>
            <person name="Murphy L."/>
            <person name="Muzny D.M."/>
            <person name="Nelson D.L."/>
            <person name="Nelson D.R."/>
            <person name="Nelson K.A."/>
            <person name="Nixon K."/>
            <person name="Nusskern D.R."/>
            <person name="Pacleb J.M."/>
            <person name="Palazzolo M."/>
            <person name="Pittman G.S."/>
            <person name="Pan S."/>
            <person name="Pollard J."/>
            <person name="Puri V."/>
            <person name="Reese M.G."/>
            <person name="Reinert K."/>
            <person name="Remington K."/>
            <person name="Saunders R.D.C."/>
            <person name="Scheeler F."/>
            <person name="Shen H."/>
            <person name="Shue B.C."/>
            <person name="Siden-Kiamos I."/>
            <person name="Simpson M."/>
            <person name="Skupski M.P."/>
            <person name="Smith T.J."/>
            <person name="Spier E."/>
            <person name="Spradling A.C."/>
            <person name="Stapleton M."/>
            <person name="Strong R."/>
            <person name="Sun E."/>
            <person name="Svirskas R."/>
            <person name="Tector C."/>
            <person name="Turner R."/>
            <person name="Venter E."/>
            <person name="Wang A.H."/>
            <person name="Wang X."/>
            <person name="Wang Z.-Y."/>
            <person name="Wassarman D.A."/>
            <person name="Weinstock G.M."/>
            <person name="Weissenbach J."/>
            <person name="Williams S.M."/>
            <person name="Woodage T."/>
            <person name="Worley K.C."/>
            <person name="Wu D."/>
            <person name="Yang S."/>
            <person name="Yao Q.A."/>
            <person name="Ye J."/>
            <person name="Yeh R.-F."/>
            <person name="Zaveri J.S."/>
            <person name="Zhan M."/>
            <person name="Zhang G."/>
            <person name="Zhao Q."/>
            <person name="Zheng L."/>
            <person name="Zheng X.H."/>
            <person name="Zhong F.N."/>
            <person name="Zhong W."/>
            <person name="Zhou X."/>
            <person name="Zhu S.C."/>
            <person name="Zhu X."/>
            <person name="Smith H.O."/>
            <person name="Gibbs R.A."/>
            <person name="Myers E.W."/>
            <person name="Rubin G.M."/>
            <person name="Venter J.C."/>
        </authorList>
    </citation>
    <scope>NUCLEOTIDE SEQUENCE [LARGE SCALE GENOMIC DNA]</scope>
    <source>
        <strain>Berkeley</strain>
    </source>
</reference>
<reference key="4">
    <citation type="journal article" date="2002" name="Genome Biol.">
        <title>Annotation of the Drosophila melanogaster euchromatic genome: a systematic review.</title>
        <authorList>
            <person name="Misra S."/>
            <person name="Crosby M.A."/>
            <person name="Mungall C.J."/>
            <person name="Matthews B.B."/>
            <person name="Campbell K.S."/>
            <person name="Hradecky P."/>
            <person name="Huang Y."/>
            <person name="Kaminker J.S."/>
            <person name="Millburn G.H."/>
            <person name="Prochnik S.E."/>
            <person name="Smith C.D."/>
            <person name="Tupy J.L."/>
            <person name="Whitfield E.J."/>
            <person name="Bayraktaroglu L."/>
            <person name="Berman B.P."/>
            <person name="Bettencourt B.R."/>
            <person name="Celniker S.E."/>
            <person name="de Grey A.D.N.J."/>
            <person name="Drysdale R.A."/>
            <person name="Harris N.L."/>
            <person name="Richter J."/>
            <person name="Russo S."/>
            <person name="Schroeder A.J."/>
            <person name="Shu S.Q."/>
            <person name="Stapleton M."/>
            <person name="Yamada C."/>
            <person name="Ashburner M."/>
            <person name="Gelbart W.M."/>
            <person name="Rubin G.M."/>
            <person name="Lewis S.E."/>
        </authorList>
    </citation>
    <scope>GENOME REANNOTATION</scope>
    <source>
        <strain>Berkeley</strain>
    </source>
</reference>
<reference key="5">
    <citation type="journal article" date="2000" name="Science">
        <title>From sequence to chromosome: the tip of the X chromosome of D. melanogaster.</title>
        <authorList>
            <person name="Benos P.V."/>
            <person name="Gatt M.K."/>
            <person name="Ashburner M."/>
            <person name="Murphy L."/>
            <person name="Harris D."/>
            <person name="Barrell B.G."/>
            <person name="Ferraz C."/>
            <person name="Vidal S."/>
            <person name="Brun C."/>
            <person name="Demailles J."/>
            <person name="Cadieu E."/>
            <person name="Dreano S."/>
            <person name="Gloux S."/>
            <person name="Lelaure V."/>
            <person name="Mottier S."/>
            <person name="Galibert F."/>
            <person name="Borkova D."/>
            <person name="Minana B."/>
            <person name="Kafatos F.C."/>
            <person name="Louis C."/>
            <person name="Siden-Kiamos I."/>
            <person name="Bolshakov S."/>
            <person name="Papagiannakis G."/>
            <person name="Spanos L."/>
            <person name="Cox S."/>
            <person name="Madueno E."/>
            <person name="de Pablos B."/>
            <person name="Modolell J."/>
            <person name="Peter A."/>
            <person name="Schoettler P."/>
            <person name="Werner M."/>
            <person name="Mourkioti F."/>
            <person name="Beinert N."/>
            <person name="Dowe G."/>
            <person name="Schaefer U."/>
            <person name="Jaeckle H."/>
            <person name="Bucheton A."/>
            <person name="Callister D.M."/>
            <person name="Campbell L.A."/>
            <person name="Darlamitsou A."/>
            <person name="Henderson N.S."/>
            <person name="McMillan P.J."/>
            <person name="Salles C."/>
            <person name="Tait E.A."/>
            <person name="Valenti P."/>
            <person name="Saunders R.D.C."/>
            <person name="Glover D.M."/>
        </authorList>
    </citation>
    <scope>NUCLEOTIDE SEQUENCE [LARGE SCALE GENOMIC DNA]</scope>
    <source>
        <strain>Oregon-R</strain>
    </source>
</reference>
<name>XPA_DROME</name>
<sequence length="296" mass="33875">MSAEVSTNESAPPAEKKSKLTNAQKARIERNQAKAQKLREAKLVSHPFKELASNKEGGTHPEAALSQGSSVIKVQGTKYIDSGGGFLLEQPVMPTGVGPAGLNKSGEEAPPILDDAIAIPVQYEECLECGDMFADSYLFNNFGHSVCDKCRDKDERYALITRTEAKAEYLLKDCDFDKREPKLRYISRKNPHNVRWGEMKLYLHLQIHQRALEVWGSEEELVRQHEAREDKREEGKARKYNKKMKQLRMEVRSSIYTKKTHEVHEHEFGPDTYDEEEDTYTHTCITCPYSETYEKM</sequence>
<gene>
    <name type="primary">Xpac</name>
    <name type="synonym">Xpa</name>
    <name type="ORF">CG6358</name>
</gene>
<proteinExistence type="evidence at transcript level"/>
<dbReference type="EMBL" id="D31893">
    <property type="protein sequence ID" value="BAA06691.1"/>
    <property type="molecule type" value="mRNA"/>
</dbReference>
<dbReference type="EMBL" id="D31892">
    <property type="protein sequence ID" value="BAA06690.1"/>
    <property type="molecule type" value="Genomic_DNA"/>
</dbReference>
<dbReference type="EMBL" id="AE014298">
    <property type="protein sequence ID" value="AAF45917.1"/>
    <property type="molecule type" value="Genomic_DNA"/>
</dbReference>
<dbReference type="EMBL" id="AL033125">
    <property type="protein sequence ID" value="CAA21834.1"/>
    <property type="molecule type" value="Genomic_DNA"/>
</dbReference>
<dbReference type="PIR" id="JQ1325">
    <property type="entry name" value="JQ1325"/>
</dbReference>
<dbReference type="RefSeq" id="NP_476866.1">
    <property type="nucleotide sequence ID" value="NM_057518.4"/>
</dbReference>
<dbReference type="SMR" id="P28518"/>
<dbReference type="BioGRID" id="57875">
    <property type="interactions" value="14"/>
</dbReference>
<dbReference type="DIP" id="DIP-17686N"/>
<dbReference type="FunCoup" id="P28518">
    <property type="interactions" value="1368"/>
</dbReference>
<dbReference type="IntAct" id="P28518">
    <property type="interactions" value="14"/>
</dbReference>
<dbReference type="STRING" id="7227.FBpp0070638"/>
<dbReference type="PaxDb" id="7227-FBpp0070638"/>
<dbReference type="EnsemblMetazoa" id="FBtr0070670">
    <property type="protein sequence ID" value="FBpp0070638"/>
    <property type="gene ID" value="FBgn0004832"/>
</dbReference>
<dbReference type="GeneID" id="31357"/>
<dbReference type="KEGG" id="dme:Dmel_CG6358"/>
<dbReference type="AGR" id="FB:FBgn0004832"/>
<dbReference type="CTD" id="31357"/>
<dbReference type="FlyBase" id="FBgn0004832">
    <property type="gene designation" value="Xpac"/>
</dbReference>
<dbReference type="VEuPathDB" id="VectorBase:FBgn0004832"/>
<dbReference type="eggNOG" id="KOG4017">
    <property type="taxonomic scope" value="Eukaryota"/>
</dbReference>
<dbReference type="GeneTree" id="ENSGT00390000002721"/>
<dbReference type="HOGENOM" id="CLU_053731_1_0_1"/>
<dbReference type="InParanoid" id="P28518"/>
<dbReference type="OMA" id="TCGHELS"/>
<dbReference type="OrthoDB" id="68328at2759"/>
<dbReference type="PhylomeDB" id="P28518"/>
<dbReference type="Reactome" id="R-DME-5696395">
    <property type="pathway name" value="Formation of Incision Complex in GG-NER"/>
</dbReference>
<dbReference type="Reactome" id="R-DME-5696400">
    <property type="pathway name" value="Dual Incision in GG-NER"/>
</dbReference>
<dbReference type="Reactome" id="R-DME-6781823">
    <property type="pathway name" value="Formation of TC-NER Pre-Incision Complex"/>
</dbReference>
<dbReference type="Reactome" id="R-DME-6782135">
    <property type="pathway name" value="Dual incision in TC-NER"/>
</dbReference>
<dbReference type="BioGRID-ORCS" id="31357">
    <property type="hits" value="0 hits in 1 CRISPR screen"/>
</dbReference>
<dbReference type="GenomeRNAi" id="31357"/>
<dbReference type="PRO" id="PR:P28518"/>
<dbReference type="Proteomes" id="UP000000803">
    <property type="component" value="Chromosome X"/>
</dbReference>
<dbReference type="Bgee" id="FBgn0004832">
    <property type="expression patterns" value="Expressed in adult myoinhibitory peptide neuron in brain and 56 other cell types or tissues"/>
</dbReference>
<dbReference type="ExpressionAtlas" id="P28518">
    <property type="expression patterns" value="baseline and differential"/>
</dbReference>
<dbReference type="GO" id="GO:0000110">
    <property type="term" value="C:nucleotide-excision repair factor 1 complex"/>
    <property type="evidence" value="ECO:0000318"/>
    <property type="project" value="GO_Central"/>
</dbReference>
<dbReference type="GO" id="GO:0005634">
    <property type="term" value="C:nucleus"/>
    <property type="evidence" value="ECO:0000314"/>
    <property type="project" value="FlyBase"/>
</dbReference>
<dbReference type="GO" id="GO:0003684">
    <property type="term" value="F:damaged DNA binding"/>
    <property type="evidence" value="ECO:0000318"/>
    <property type="project" value="GO_Central"/>
</dbReference>
<dbReference type="GO" id="GO:0008270">
    <property type="term" value="F:zinc ion binding"/>
    <property type="evidence" value="ECO:0007669"/>
    <property type="project" value="UniProtKB-KW"/>
</dbReference>
<dbReference type="GO" id="GO:0006284">
    <property type="term" value="P:base-excision repair"/>
    <property type="evidence" value="ECO:0000318"/>
    <property type="project" value="GO_Central"/>
</dbReference>
<dbReference type="GO" id="GO:0006289">
    <property type="term" value="P:nucleotide-excision repair"/>
    <property type="evidence" value="ECO:0000314"/>
    <property type="project" value="FlyBase"/>
</dbReference>
<dbReference type="GO" id="GO:1901255">
    <property type="term" value="P:nucleotide-excision repair involved in interstrand cross-link repair"/>
    <property type="evidence" value="ECO:0000318"/>
    <property type="project" value="GO_Central"/>
</dbReference>
<dbReference type="GO" id="GO:0000715">
    <property type="term" value="P:nucleotide-excision repair, DNA damage recognition"/>
    <property type="evidence" value="ECO:0000318"/>
    <property type="project" value="GO_Central"/>
</dbReference>
<dbReference type="GO" id="GO:0070914">
    <property type="term" value="P:UV-damage excision repair"/>
    <property type="evidence" value="ECO:0000318"/>
    <property type="project" value="GO_Central"/>
</dbReference>
<dbReference type="CDD" id="cd21076">
    <property type="entry name" value="DBD_XPA"/>
    <property type="match status" value="1"/>
</dbReference>
<dbReference type="FunFam" id="3.90.530.10:FF:000001">
    <property type="entry name" value="DNA repair protein complementing XP-A cells"/>
    <property type="match status" value="1"/>
</dbReference>
<dbReference type="Gene3D" id="3.90.530.10">
    <property type="entry name" value="XPA C-terminal domain"/>
    <property type="match status" value="1"/>
</dbReference>
<dbReference type="InterPro" id="IPR009061">
    <property type="entry name" value="DNA-bd_dom_put_sf"/>
</dbReference>
<dbReference type="InterPro" id="IPR000465">
    <property type="entry name" value="XPA/RAD14"/>
</dbReference>
<dbReference type="InterPro" id="IPR022656">
    <property type="entry name" value="XPA_C"/>
</dbReference>
<dbReference type="InterPro" id="IPR022658">
    <property type="entry name" value="XPA_CS"/>
</dbReference>
<dbReference type="InterPro" id="IPR037129">
    <property type="entry name" value="XPA_sf"/>
</dbReference>
<dbReference type="InterPro" id="IPR022652">
    <property type="entry name" value="Znf_XPA_CS"/>
</dbReference>
<dbReference type="NCBIfam" id="TIGR00598">
    <property type="entry name" value="rad14"/>
    <property type="match status" value="1"/>
</dbReference>
<dbReference type="PANTHER" id="PTHR10142">
    <property type="entry name" value="DNA REPAIR PROTEIN COMPLEMENTING XP-A CELLS"/>
    <property type="match status" value="1"/>
</dbReference>
<dbReference type="PANTHER" id="PTHR10142:SF0">
    <property type="entry name" value="DNA REPAIR PROTEIN COMPLEMENTING XP-A CELLS"/>
    <property type="match status" value="1"/>
</dbReference>
<dbReference type="Pfam" id="PF05181">
    <property type="entry name" value="XPA_C"/>
    <property type="match status" value="1"/>
</dbReference>
<dbReference type="Pfam" id="PF01286">
    <property type="entry name" value="XPA_N"/>
    <property type="match status" value="1"/>
</dbReference>
<dbReference type="SUPFAM" id="SSF57716">
    <property type="entry name" value="Glucocorticoid receptor-like (DNA-binding domain)"/>
    <property type="match status" value="1"/>
</dbReference>
<dbReference type="SUPFAM" id="SSF46955">
    <property type="entry name" value="Putative DNA-binding domain"/>
    <property type="match status" value="1"/>
</dbReference>
<dbReference type="PROSITE" id="PS00752">
    <property type="entry name" value="XPA_1"/>
    <property type="match status" value="1"/>
</dbReference>
<dbReference type="PROSITE" id="PS00753">
    <property type="entry name" value="XPA_2"/>
    <property type="match status" value="1"/>
</dbReference>
<protein>
    <recommendedName>
        <fullName>DNA repair protein complementing XP-A cells homolog</fullName>
    </recommendedName>
    <alternativeName>
        <fullName>Xeroderma pigmentosum group A-complementing protein homolog</fullName>
    </alternativeName>
</protein>
<keyword id="KW-0227">DNA damage</keyword>
<keyword id="KW-0234">DNA repair</keyword>
<keyword id="KW-0238">DNA-binding</keyword>
<keyword id="KW-0479">Metal-binding</keyword>
<keyword id="KW-0539">Nucleus</keyword>
<keyword id="KW-1185">Reference proteome</keyword>
<keyword id="KW-0862">Zinc</keyword>
<keyword id="KW-0863">Zinc-finger</keyword>
<comment type="function">
    <text evidence="1">Involved in DNA excision repair. Initiates repair by binding to damaged sites with various affinities, depending on the photoproduct and the transcriptional state of the region (By similarity).</text>
</comment>
<comment type="subcellular location">
    <subcellularLocation>
        <location>Nucleus</location>
    </subcellularLocation>
</comment>
<comment type="tissue specificity">
    <text>Strongly expressed in the central nervous system and muscles.</text>
</comment>
<comment type="developmental stage">
    <text>Continuously expressed in all stages of development.</text>
</comment>
<comment type="similarity">
    <text evidence="5">Belongs to the XPA family.</text>
</comment>
<feature type="chain" id="PRO_0000208652" description="DNA repair protein complementing XP-A cells homolog">
    <location>
        <begin position="1"/>
        <end position="296"/>
    </location>
</feature>
<feature type="zinc finger region">
    <location>
        <begin position="126"/>
        <end position="150"/>
    </location>
</feature>
<feature type="region of interest" description="Disordered" evidence="4">
    <location>
        <begin position="1"/>
        <end position="39"/>
    </location>
</feature>
<feature type="short sequence motif" description="Nuclear localization signal" evidence="3">
    <location>
        <begin position="26"/>
        <end position="47"/>
    </location>
</feature>
<feature type="compositionally biased region" description="Polar residues" evidence="4">
    <location>
        <begin position="1"/>
        <end position="10"/>
    </location>
</feature>
<feature type="compositionally biased region" description="Basic and acidic residues" evidence="4">
    <location>
        <begin position="26"/>
        <end position="39"/>
    </location>
</feature>
<feature type="binding site" evidence="2">
    <location>
        <position position="126"/>
    </location>
    <ligand>
        <name>Zn(2+)</name>
        <dbReference type="ChEBI" id="CHEBI:29105"/>
    </ligand>
</feature>
<feature type="binding site" evidence="2">
    <location>
        <position position="129"/>
    </location>
    <ligand>
        <name>Zn(2+)</name>
        <dbReference type="ChEBI" id="CHEBI:29105"/>
    </ligand>
</feature>
<feature type="binding site" evidence="2">
    <location>
        <position position="147"/>
    </location>
    <ligand>
        <name>Zn(2+)</name>
        <dbReference type="ChEBI" id="CHEBI:29105"/>
    </ligand>
</feature>
<feature type="binding site" evidence="2">
    <location>
        <position position="150"/>
    </location>
    <ligand>
        <name>Zn(2+)</name>
        <dbReference type="ChEBI" id="CHEBI:29105"/>
    </ligand>
</feature>
<feature type="sequence conflict" description="In Ref. 2; BAA06690." evidence="5" ref="2">
    <original>S</original>
    <variation>A</variation>
    <location>
        <position position="10"/>
    </location>
</feature>
<feature type="sequence conflict" description="In Ref. 1; BAA06691." evidence="5" ref="1">
    <original>QHE</original>
    <variation>HEQ</variation>
    <location>
        <begin position="224"/>
        <end position="226"/>
    </location>
</feature>
<accession>P28518</accession>
<accession>Q24594</accession>
<accession>Q9V3V8</accession>
<organism>
    <name type="scientific">Drosophila melanogaster</name>
    <name type="common">Fruit fly</name>
    <dbReference type="NCBI Taxonomy" id="7227"/>
    <lineage>
        <taxon>Eukaryota</taxon>
        <taxon>Metazoa</taxon>
        <taxon>Ecdysozoa</taxon>
        <taxon>Arthropoda</taxon>
        <taxon>Hexapoda</taxon>
        <taxon>Insecta</taxon>
        <taxon>Pterygota</taxon>
        <taxon>Neoptera</taxon>
        <taxon>Endopterygota</taxon>
        <taxon>Diptera</taxon>
        <taxon>Brachycera</taxon>
        <taxon>Muscomorpha</taxon>
        <taxon>Ephydroidea</taxon>
        <taxon>Drosophilidae</taxon>
        <taxon>Drosophila</taxon>
        <taxon>Sophophora</taxon>
    </lineage>
</organism>